<comment type="function">
    <text evidence="1">Plays a role in pre-mRNA splicing as a core component of the spliceosomal U1, U2, U4 and U5 small nuclear ribonucleoproteins (snRNPs), the building blocks of the spliceosome (By similarity).</text>
</comment>
<comment type="subunit">
    <text evidence="4">Belongs to the 40S cdc5-associated complex (or cwf complex), a spliceosome sub-complex reminiscent of a late-stage spliceosome composed of the U2, U5 and U6 snRNAs and at least brr2, cdc5, cwf2/prp3, cwf3/syf1, cwf4/syf3, cwf5/ecm2, spp42/cwf6, cwf7/spf27, cwf8, cwf9, cwf10, cwf11, cwf12, prp45/cwf13, cwf14, cwf15, cwf16, cwf17, cwf18, cwf19, cwf20, cwf21, cwf22, cwf23, cwf24, cwf25, cwf26, cyp7/cwf27, cwf28, cwf29/ist3, lea1, msl1, prp5/cwf1, prp10, prp12/sap130, prp17, prp22, sap61, sap62, sap114, sap145, slu7, smb1, smd1, smd3, smf1, smg1 and syf2.</text>
</comment>
<comment type="subcellular location">
    <subcellularLocation>
        <location evidence="5 6 7">Nucleus</location>
    </subcellularLocation>
    <subcellularLocation>
        <location evidence="5 6 7">Cytoplasm</location>
    </subcellularLocation>
    <text evidence="6">Localizes to the nucleus predominantly.</text>
</comment>
<comment type="similarity">
    <text evidence="8">Belongs to the snRNP SmB/SmN family.</text>
</comment>
<keyword id="KW-0002">3D-structure</keyword>
<keyword id="KW-0963">Cytoplasm</keyword>
<keyword id="KW-0507">mRNA processing</keyword>
<keyword id="KW-0508">mRNA splicing</keyword>
<keyword id="KW-0539">Nucleus</keyword>
<keyword id="KW-1185">Reference proteome</keyword>
<keyword id="KW-0687">Ribonucleoprotein</keyword>
<keyword id="KW-0694">RNA-binding</keyword>
<keyword id="KW-0747">Spliceosome</keyword>
<name>RSMB_SCHPO</name>
<accession>Q10163</accession>
<reference key="1">
    <citation type="journal article" date="2002" name="Nature">
        <title>The genome sequence of Schizosaccharomyces pombe.</title>
        <authorList>
            <person name="Wood V."/>
            <person name="Gwilliam R."/>
            <person name="Rajandream M.A."/>
            <person name="Lyne M.H."/>
            <person name="Lyne R."/>
            <person name="Stewart A."/>
            <person name="Sgouros J.G."/>
            <person name="Peat N."/>
            <person name="Hayles J."/>
            <person name="Baker S.G."/>
            <person name="Basham D."/>
            <person name="Bowman S."/>
            <person name="Brooks K."/>
            <person name="Brown D."/>
            <person name="Brown S."/>
            <person name="Chillingworth T."/>
            <person name="Churcher C.M."/>
            <person name="Collins M."/>
            <person name="Connor R."/>
            <person name="Cronin A."/>
            <person name="Davis P."/>
            <person name="Feltwell T."/>
            <person name="Fraser A."/>
            <person name="Gentles S."/>
            <person name="Goble A."/>
            <person name="Hamlin N."/>
            <person name="Harris D.E."/>
            <person name="Hidalgo J."/>
            <person name="Hodgson G."/>
            <person name="Holroyd S."/>
            <person name="Hornsby T."/>
            <person name="Howarth S."/>
            <person name="Huckle E.J."/>
            <person name="Hunt S."/>
            <person name="Jagels K."/>
            <person name="James K.D."/>
            <person name="Jones L."/>
            <person name="Jones M."/>
            <person name="Leather S."/>
            <person name="McDonald S."/>
            <person name="McLean J."/>
            <person name="Mooney P."/>
            <person name="Moule S."/>
            <person name="Mungall K.L."/>
            <person name="Murphy L.D."/>
            <person name="Niblett D."/>
            <person name="Odell C."/>
            <person name="Oliver K."/>
            <person name="O'Neil S."/>
            <person name="Pearson D."/>
            <person name="Quail M.A."/>
            <person name="Rabbinowitsch E."/>
            <person name="Rutherford K.M."/>
            <person name="Rutter S."/>
            <person name="Saunders D."/>
            <person name="Seeger K."/>
            <person name="Sharp S."/>
            <person name="Skelton J."/>
            <person name="Simmonds M.N."/>
            <person name="Squares R."/>
            <person name="Squares S."/>
            <person name="Stevens K."/>
            <person name="Taylor K."/>
            <person name="Taylor R.G."/>
            <person name="Tivey A."/>
            <person name="Walsh S.V."/>
            <person name="Warren T."/>
            <person name="Whitehead S."/>
            <person name="Woodward J.R."/>
            <person name="Volckaert G."/>
            <person name="Aert R."/>
            <person name="Robben J."/>
            <person name="Grymonprez B."/>
            <person name="Weltjens I."/>
            <person name="Vanstreels E."/>
            <person name="Rieger M."/>
            <person name="Schaefer M."/>
            <person name="Mueller-Auer S."/>
            <person name="Gabel C."/>
            <person name="Fuchs M."/>
            <person name="Duesterhoeft A."/>
            <person name="Fritzc C."/>
            <person name="Holzer E."/>
            <person name="Moestl D."/>
            <person name="Hilbert H."/>
            <person name="Borzym K."/>
            <person name="Langer I."/>
            <person name="Beck A."/>
            <person name="Lehrach H."/>
            <person name="Reinhardt R."/>
            <person name="Pohl T.M."/>
            <person name="Eger P."/>
            <person name="Zimmermann W."/>
            <person name="Wedler H."/>
            <person name="Wambutt R."/>
            <person name="Purnelle B."/>
            <person name="Goffeau A."/>
            <person name="Cadieu E."/>
            <person name="Dreano S."/>
            <person name="Gloux S."/>
            <person name="Lelaure V."/>
            <person name="Mottier S."/>
            <person name="Galibert F."/>
            <person name="Aves S.J."/>
            <person name="Xiang Z."/>
            <person name="Hunt C."/>
            <person name="Moore K."/>
            <person name="Hurst S.M."/>
            <person name="Lucas M."/>
            <person name="Rochet M."/>
            <person name="Gaillardin C."/>
            <person name="Tallada V.A."/>
            <person name="Garzon A."/>
            <person name="Thode G."/>
            <person name="Daga R.R."/>
            <person name="Cruzado L."/>
            <person name="Jimenez J."/>
            <person name="Sanchez M."/>
            <person name="del Rey F."/>
            <person name="Benito J."/>
            <person name="Dominguez A."/>
            <person name="Revuelta J.L."/>
            <person name="Moreno S."/>
            <person name="Armstrong J."/>
            <person name="Forsburg S.L."/>
            <person name="Cerutti L."/>
            <person name="Lowe T."/>
            <person name="McCombie W.R."/>
            <person name="Paulsen I."/>
            <person name="Potashkin J."/>
            <person name="Shpakovski G.V."/>
            <person name="Ussery D."/>
            <person name="Barrell B.G."/>
            <person name="Nurse P."/>
        </authorList>
    </citation>
    <scope>NUCLEOTIDE SEQUENCE [LARGE SCALE GENOMIC DNA]</scope>
    <source>
        <strain>972 / ATCC 24843</strain>
    </source>
</reference>
<reference key="2">
    <citation type="journal article" date="2002" name="Mol. Cell. Biol.">
        <title>Proteomics analysis reveals stable multiprotein complexes in both fission and budding yeasts containing Myb-related Cdc5p/Cef1p, novel pre-mRNA splicing factors, and snRNAs.</title>
        <authorList>
            <person name="Ohi M.D."/>
            <person name="Link A.J."/>
            <person name="Ren L."/>
            <person name="Jennings J.L."/>
            <person name="McDonald W.H."/>
            <person name="Gould K.L."/>
        </authorList>
    </citation>
    <scope>IDENTIFICATION IN THE CWF COMPLEX</scope>
    <scope>IDENTIFICATION BY MASS SPECTROMETRY</scope>
</reference>
<reference key="3">
    <citation type="journal article" date="2006" name="Nat. Biotechnol.">
        <title>ORFeome cloning and global analysis of protein localization in the fission yeast Schizosaccharomyces pombe.</title>
        <authorList>
            <person name="Matsuyama A."/>
            <person name="Arai R."/>
            <person name="Yashiroda Y."/>
            <person name="Shirai A."/>
            <person name="Kamata A."/>
            <person name="Sekido S."/>
            <person name="Kobayashi Y."/>
            <person name="Hashimoto A."/>
            <person name="Hamamoto M."/>
            <person name="Hiraoka Y."/>
            <person name="Horinouchi S."/>
            <person name="Yoshida M."/>
        </authorList>
    </citation>
    <scope>SUBCELLULAR LOCATION [LARGE SCALE ANALYSIS]</scope>
</reference>
<reference key="4">
    <citation type="journal article" date="2014" name="Mol. Cell. Biol.">
        <title>Characterization and in vivo functional analysis of the Schizosaccharomyces pombe ICLN gene.</title>
        <authorList>
            <person name="Barbarossa A."/>
            <person name="Antoine E."/>
            <person name="Neel H."/>
            <person name="Gostan T."/>
            <person name="Soret J."/>
            <person name="Bordonne R."/>
        </authorList>
    </citation>
    <scope>SUBCELLULAR LOCATION</scope>
</reference>
<reference key="5">
    <citation type="journal article" date="2015" name="PLoS ONE">
        <title>Genetic Interactions between the Members of the SMN-Gemins Complex in Drosophila.</title>
        <authorList>
            <person name="Borg R.M."/>
            <person name="Bordonne R."/>
            <person name="Vassallo N."/>
            <person name="Cauchi R.J."/>
        </authorList>
    </citation>
    <scope>SUBCELLULAR LOCATION</scope>
</reference>
<protein>
    <recommendedName>
        <fullName>Small nuclear ribonucleoprotein-associated protein B</fullName>
        <shortName>snRNP-B</shortName>
    </recommendedName>
    <alternativeName>
        <fullName>Sm protein B</fullName>
        <shortName>Sm-B</shortName>
        <shortName>SmB</shortName>
    </alternativeName>
</protein>
<gene>
    <name type="primary">smb1</name>
    <name type="ORF">SPAC26A3.08</name>
</gene>
<evidence type="ECO:0000250" key="1">
    <source>
        <dbReference type="UniProtKB" id="P14678"/>
    </source>
</evidence>
<evidence type="ECO:0000255" key="2">
    <source>
        <dbReference type="PROSITE-ProRule" id="PRU01346"/>
    </source>
</evidence>
<evidence type="ECO:0000256" key="3">
    <source>
        <dbReference type="SAM" id="MobiDB-lite"/>
    </source>
</evidence>
<evidence type="ECO:0000269" key="4">
    <source>
    </source>
</evidence>
<evidence type="ECO:0000269" key="5">
    <source>
    </source>
</evidence>
<evidence type="ECO:0000269" key="6">
    <source>
    </source>
</evidence>
<evidence type="ECO:0000269" key="7">
    <source>
    </source>
</evidence>
<evidence type="ECO:0000305" key="8"/>
<evidence type="ECO:0007829" key="9">
    <source>
        <dbReference type="PDB" id="9ESI"/>
    </source>
</evidence>
<feature type="chain" id="PRO_0000125528" description="Small nuclear ribonucleoprotein-associated protein B">
    <location>
        <begin position="1"/>
        <end position="147"/>
    </location>
</feature>
<feature type="domain" description="Sm" evidence="2">
    <location>
        <begin position="1"/>
        <end position="84"/>
    </location>
</feature>
<feature type="region of interest" description="Disordered" evidence="3">
    <location>
        <begin position="87"/>
        <end position="106"/>
    </location>
</feature>
<feature type="region of interest" description="Disordered" evidence="3">
    <location>
        <begin position="128"/>
        <end position="147"/>
    </location>
</feature>
<feature type="helix" evidence="9">
    <location>
        <begin position="4"/>
        <end position="7"/>
    </location>
</feature>
<feature type="turn" evidence="9">
    <location>
        <begin position="8"/>
        <end position="11"/>
    </location>
</feature>
<feature type="strand" evidence="9">
    <location>
        <begin position="12"/>
        <end position="21"/>
    </location>
</feature>
<feature type="strand" evidence="9">
    <location>
        <begin position="23"/>
        <end position="30"/>
    </location>
</feature>
<feature type="strand" evidence="9">
    <location>
        <begin position="38"/>
        <end position="46"/>
    </location>
</feature>
<feature type="strand" evidence="9">
    <location>
        <begin position="61"/>
        <end position="70"/>
    </location>
</feature>
<feature type="turn" evidence="9">
    <location>
        <begin position="72"/>
        <end position="74"/>
    </location>
</feature>
<feature type="strand" evidence="9">
    <location>
        <begin position="75"/>
        <end position="82"/>
    </location>
</feature>
<feature type="strand" evidence="9">
    <location>
        <begin position="100"/>
        <end position="103"/>
    </location>
</feature>
<proteinExistence type="evidence at protein level"/>
<dbReference type="EMBL" id="CU329670">
    <property type="protein sequence ID" value="CAA93231.1"/>
    <property type="molecule type" value="Genomic_DNA"/>
</dbReference>
<dbReference type="PIR" id="T38396">
    <property type="entry name" value="T38396"/>
</dbReference>
<dbReference type="RefSeq" id="NP_594151.1">
    <property type="nucleotide sequence ID" value="NM_001019575.2"/>
</dbReference>
<dbReference type="PDB" id="3JB9">
    <property type="method" value="EM"/>
    <property type="resolution" value="3.60 A"/>
    <property type="chains" value="E/b=1-147"/>
</dbReference>
<dbReference type="PDB" id="9ESH">
    <property type="method" value="EM"/>
    <property type="resolution" value="3.20 A"/>
    <property type="chains" value="E=1-147"/>
</dbReference>
<dbReference type="PDB" id="9ESI">
    <property type="method" value="EM"/>
    <property type="resolution" value="3.10 A"/>
    <property type="chains" value="E=1-147"/>
</dbReference>
<dbReference type="PDBsum" id="3JB9"/>
<dbReference type="PDBsum" id="9ESH"/>
<dbReference type="PDBsum" id="9ESI"/>
<dbReference type="EMDB" id="EMD-19941"/>
<dbReference type="EMDB" id="EMD-19942"/>
<dbReference type="SMR" id="Q10163"/>
<dbReference type="BioGRID" id="279137">
    <property type="interactions" value="27"/>
</dbReference>
<dbReference type="FunCoup" id="Q10163">
    <property type="interactions" value="506"/>
</dbReference>
<dbReference type="IntAct" id="Q10163">
    <property type="interactions" value="8"/>
</dbReference>
<dbReference type="STRING" id="284812.Q10163"/>
<dbReference type="PaxDb" id="4896-SPAC26A3.08.1"/>
<dbReference type="EnsemblFungi" id="SPAC26A3.08.1">
    <property type="protein sequence ID" value="SPAC26A3.08.1:pep"/>
    <property type="gene ID" value="SPAC26A3.08"/>
</dbReference>
<dbReference type="GeneID" id="2542684"/>
<dbReference type="KEGG" id="spo:2542684"/>
<dbReference type="PomBase" id="SPAC26A3.08">
    <property type="gene designation" value="smb1"/>
</dbReference>
<dbReference type="VEuPathDB" id="FungiDB:SPAC26A3.08"/>
<dbReference type="eggNOG" id="KOG3168">
    <property type="taxonomic scope" value="Eukaryota"/>
</dbReference>
<dbReference type="HOGENOM" id="CLU_076902_1_1_1"/>
<dbReference type="InParanoid" id="Q10163"/>
<dbReference type="OMA" id="MGTTKMV"/>
<dbReference type="PhylomeDB" id="Q10163"/>
<dbReference type="Reactome" id="R-SPO-72163">
    <property type="pathway name" value="mRNA Splicing - Major Pathway"/>
</dbReference>
<dbReference type="EvolutionaryTrace" id="Q10163"/>
<dbReference type="PRO" id="PR:Q10163"/>
<dbReference type="Proteomes" id="UP000002485">
    <property type="component" value="Chromosome I"/>
</dbReference>
<dbReference type="GO" id="GO:0071013">
    <property type="term" value="C:catalytic step 2 spliceosome"/>
    <property type="evidence" value="ECO:0000318"/>
    <property type="project" value="GO_Central"/>
</dbReference>
<dbReference type="GO" id="GO:0005737">
    <property type="term" value="C:cytoplasm"/>
    <property type="evidence" value="ECO:0000318"/>
    <property type="project" value="GO_Central"/>
</dbReference>
<dbReference type="GO" id="GO:0005829">
    <property type="term" value="C:cytosol"/>
    <property type="evidence" value="ECO:0007005"/>
    <property type="project" value="PomBase"/>
</dbReference>
<dbReference type="GO" id="GO:0005634">
    <property type="term" value="C:nucleus"/>
    <property type="evidence" value="ECO:0007005"/>
    <property type="project" value="PomBase"/>
</dbReference>
<dbReference type="GO" id="GO:0071014">
    <property type="term" value="C:post-mRNA release spliceosomal complex"/>
    <property type="evidence" value="ECO:0000314"/>
    <property type="project" value="PomBase"/>
</dbReference>
<dbReference type="GO" id="GO:0005681">
    <property type="term" value="C:spliceosomal complex"/>
    <property type="evidence" value="ECO:0000314"/>
    <property type="project" value="PomBase"/>
</dbReference>
<dbReference type="GO" id="GO:0005685">
    <property type="term" value="C:U1 snRNP"/>
    <property type="evidence" value="ECO:0000314"/>
    <property type="project" value="PomBase"/>
</dbReference>
<dbReference type="GO" id="GO:0005686">
    <property type="term" value="C:U2 snRNP"/>
    <property type="evidence" value="ECO:0000314"/>
    <property type="project" value="PomBase"/>
</dbReference>
<dbReference type="GO" id="GO:0071004">
    <property type="term" value="C:U2-type prespliceosome"/>
    <property type="evidence" value="ECO:0000318"/>
    <property type="project" value="GO_Central"/>
</dbReference>
<dbReference type="GO" id="GO:0005687">
    <property type="term" value="C:U4 snRNP"/>
    <property type="evidence" value="ECO:0000318"/>
    <property type="project" value="GO_Central"/>
</dbReference>
<dbReference type="GO" id="GO:0046540">
    <property type="term" value="C:U4/U6 x U5 tri-snRNP complex"/>
    <property type="evidence" value="ECO:0000318"/>
    <property type="project" value="GO_Central"/>
</dbReference>
<dbReference type="GO" id="GO:0005682">
    <property type="term" value="C:U5 snRNP"/>
    <property type="evidence" value="ECO:0000314"/>
    <property type="project" value="PomBase"/>
</dbReference>
<dbReference type="GO" id="GO:0003723">
    <property type="term" value="F:RNA binding"/>
    <property type="evidence" value="ECO:0007669"/>
    <property type="project" value="UniProtKB-KW"/>
</dbReference>
<dbReference type="GO" id="GO:0070990">
    <property type="term" value="F:snRNP binding"/>
    <property type="evidence" value="ECO:0000318"/>
    <property type="project" value="GO_Central"/>
</dbReference>
<dbReference type="GO" id="GO:0000395">
    <property type="term" value="P:mRNA 5'-splice site recognition"/>
    <property type="evidence" value="ECO:0000305"/>
    <property type="project" value="PomBase"/>
</dbReference>
<dbReference type="GO" id="GO:0045292">
    <property type="term" value="P:mRNA cis splicing, via spliceosome"/>
    <property type="evidence" value="ECO:0000315"/>
    <property type="project" value="PomBase"/>
</dbReference>
<dbReference type="GO" id="GO:0000398">
    <property type="term" value="P:mRNA splicing, via spliceosome"/>
    <property type="evidence" value="ECO:0000318"/>
    <property type="project" value="GO_Central"/>
</dbReference>
<dbReference type="CDD" id="cd01717">
    <property type="entry name" value="Sm_B"/>
    <property type="match status" value="1"/>
</dbReference>
<dbReference type="Gene3D" id="2.30.30.100">
    <property type="match status" value="1"/>
</dbReference>
<dbReference type="InterPro" id="IPR010920">
    <property type="entry name" value="LSM_dom_sf"/>
</dbReference>
<dbReference type="InterPro" id="IPR047575">
    <property type="entry name" value="Sm"/>
</dbReference>
<dbReference type="InterPro" id="IPR001163">
    <property type="entry name" value="Sm_dom_euk/arc"/>
</dbReference>
<dbReference type="InterPro" id="IPR050914">
    <property type="entry name" value="snRNP_SmB/NAA38-like"/>
</dbReference>
<dbReference type="PANTHER" id="PTHR10701:SF0">
    <property type="entry name" value="SMALL NUCLEAR RIBONUCLEOPROTEIN-ASSOCIATED PROTEIN B"/>
    <property type="match status" value="1"/>
</dbReference>
<dbReference type="PANTHER" id="PTHR10701">
    <property type="entry name" value="SMALL NUCLEAR RIBONUCLEOPROTEIN-ASSOCIATED PROTEIN B AND N"/>
    <property type="match status" value="1"/>
</dbReference>
<dbReference type="Pfam" id="PF01423">
    <property type="entry name" value="LSM"/>
    <property type="match status" value="1"/>
</dbReference>
<dbReference type="SMART" id="SM00651">
    <property type="entry name" value="Sm"/>
    <property type="match status" value="1"/>
</dbReference>
<dbReference type="SUPFAM" id="SSF50182">
    <property type="entry name" value="Sm-like ribonucleoproteins"/>
    <property type="match status" value="1"/>
</dbReference>
<dbReference type="PROSITE" id="PS52002">
    <property type="entry name" value="SM"/>
    <property type="match status" value="1"/>
</dbReference>
<sequence>MGTTKMVSLLNHSLNVTTKDGRTFVGQLLAFDGFMNLVLSDCQEYRHIKKQNVPSNSVYEEKRMLGLVILRGEFIVSLSVQGPPPMDPSMRGSLLSGPGVARPAGRGIPLGQAPVGLAGPVRGVGYTAPPPPAGFGRGAPPPGFRPV</sequence>
<organism>
    <name type="scientific">Schizosaccharomyces pombe (strain 972 / ATCC 24843)</name>
    <name type="common">Fission yeast</name>
    <dbReference type="NCBI Taxonomy" id="284812"/>
    <lineage>
        <taxon>Eukaryota</taxon>
        <taxon>Fungi</taxon>
        <taxon>Dikarya</taxon>
        <taxon>Ascomycota</taxon>
        <taxon>Taphrinomycotina</taxon>
        <taxon>Schizosaccharomycetes</taxon>
        <taxon>Schizosaccharomycetales</taxon>
        <taxon>Schizosaccharomycetaceae</taxon>
        <taxon>Schizosaccharomyces</taxon>
    </lineage>
</organism>